<sequence>MPRANEIKKGMVLNYNGKLLLVKDIDIQSPTARGAATLYKMRFSDVRTGLKVEERFKGDDIVDTVTLTRRYVDFSYVDGNEYVFMDKEDYTPYTFTKDQIEEELLFMPEGGMPDMQVLTWDGQLLALELPQTVDLEIVETAPGIKGASASARNKPATLSTGLVIQVPEYLSPGEKIRIHIEERRYMGRAD</sequence>
<proteinExistence type="inferred from homology"/>
<gene>
    <name evidence="1" type="primary">yeiP</name>
    <name type="ordered locus">EcE24377A_2469</name>
</gene>
<reference key="1">
    <citation type="journal article" date="2008" name="J. Bacteriol.">
        <title>The pangenome structure of Escherichia coli: comparative genomic analysis of E. coli commensal and pathogenic isolates.</title>
        <authorList>
            <person name="Rasko D.A."/>
            <person name="Rosovitz M.J."/>
            <person name="Myers G.S.A."/>
            <person name="Mongodin E.F."/>
            <person name="Fricke W.F."/>
            <person name="Gajer P."/>
            <person name="Crabtree J."/>
            <person name="Sebaihia M."/>
            <person name="Thomson N.R."/>
            <person name="Chaudhuri R."/>
            <person name="Henderson I.R."/>
            <person name="Sperandio V."/>
            <person name="Ravel J."/>
        </authorList>
    </citation>
    <scope>NUCLEOTIDE SEQUENCE [LARGE SCALE GENOMIC DNA]</scope>
    <source>
        <strain>E24377A / ETEC</strain>
    </source>
</reference>
<feature type="chain" id="PRO_0000384911" description="Elongation factor P-like protein">
    <location>
        <begin position="1"/>
        <end position="190"/>
    </location>
</feature>
<evidence type="ECO:0000255" key="1">
    <source>
        <dbReference type="HAMAP-Rule" id="MF_00646"/>
    </source>
</evidence>
<evidence type="ECO:0000305" key="2"/>
<accession>A7ZNZ5</accession>
<keyword id="KW-1185">Reference proteome</keyword>
<name>EFPL_ECO24</name>
<organism>
    <name type="scientific">Escherichia coli O139:H28 (strain E24377A / ETEC)</name>
    <dbReference type="NCBI Taxonomy" id="331111"/>
    <lineage>
        <taxon>Bacteria</taxon>
        <taxon>Pseudomonadati</taxon>
        <taxon>Pseudomonadota</taxon>
        <taxon>Gammaproteobacteria</taxon>
        <taxon>Enterobacterales</taxon>
        <taxon>Enterobacteriaceae</taxon>
        <taxon>Escherichia</taxon>
    </lineage>
</organism>
<dbReference type="EMBL" id="CP000800">
    <property type="protein sequence ID" value="ABV18081.1"/>
    <property type="status" value="ALT_INIT"/>
    <property type="molecule type" value="Genomic_DNA"/>
</dbReference>
<dbReference type="RefSeq" id="WP_001136827.1">
    <property type="nucleotide sequence ID" value="NC_009801.1"/>
</dbReference>
<dbReference type="SMR" id="A7ZNZ5"/>
<dbReference type="GeneID" id="93775010"/>
<dbReference type="KEGG" id="ecw:EcE24377A_2469"/>
<dbReference type="HOGENOM" id="CLU_074944_2_0_6"/>
<dbReference type="Proteomes" id="UP000001122">
    <property type="component" value="Chromosome"/>
</dbReference>
<dbReference type="GO" id="GO:0005829">
    <property type="term" value="C:cytosol"/>
    <property type="evidence" value="ECO:0007669"/>
    <property type="project" value="UniProtKB-ARBA"/>
</dbReference>
<dbReference type="GO" id="GO:0003746">
    <property type="term" value="F:translation elongation factor activity"/>
    <property type="evidence" value="ECO:0007669"/>
    <property type="project" value="UniProtKB-UniRule"/>
</dbReference>
<dbReference type="GO" id="GO:0043043">
    <property type="term" value="P:peptide biosynthetic process"/>
    <property type="evidence" value="ECO:0007669"/>
    <property type="project" value="InterPro"/>
</dbReference>
<dbReference type="CDD" id="cd04470">
    <property type="entry name" value="S1_EF-P_repeat_1"/>
    <property type="match status" value="1"/>
</dbReference>
<dbReference type="CDD" id="cd05794">
    <property type="entry name" value="S1_EF-P_repeat_2"/>
    <property type="match status" value="1"/>
</dbReference>
<dbReference type="FunFam" id="2.40.50.140:FF:000004">
    <property type="entry name" value="Elongation factor P"/>
    <property type="match status" value="1"/>
</dbReference>
<dbReference type="FunFam" id="2.30.30.30:FF:000011">
    <property type="entry name" value="Elongation factor P-like protein"/>
    <property type="match status" value="1"/>
</dbReference>
<dbReference type="FunFam" id="2.40.50.140:FF:000053">
    <property type="entry name" value="Elongation factor P-like protein"/>
    <property type="match status" value="1"/>
</dbReference>
<dbReference type="Gene3D" id="2.30.30.30">
    <property type="match status" value="1"/>
</dbReference>
<dbReference type="Gene3D" id="2.40.50.140">
    <property type="entry name" value="Nucleic acid-binding proteins"/>
    <property type="match status" value="2"/>
</dbReference>
<dbReference type="HAMAP" id="MF_00646">
    <property type="entry name" value="EFP"/>
    <property type="match status" value="1"/>
</dbReference>
<dbReference type="InterPro" id="IPR015365">
    <property type="entry name" value="Elong-fact-P_C"/>
</dbReference>
<dbReference type="InterPro" id="IPR012340">
    <property type="entry name" value="NA-bd_OB-fold"/>
</dbReference>
<dbReference type="InterPro" id="IPR014722">
    <property type="entry name" value="Rib_uL2_dom2"/>
</dbReference>
<dbReference type="InterPro" id="IPR020599">
    <property type="entry name" value="Transl_elong_fac_P/YeiP"/>
</dbReference>
<dbReference type="InterPro" id="IPR013185">
    <property type="entry name" value="Transl_elong_KOW-like"/>
</dbReference>
<dbReference type="InterPro" id="IPR011897">
    <property type="entry name" value="Transl_elong_p-like_YeiP"/>
</dbReference>
<dbReference type="InterPro" id="IPR001059">
    <property type="entry name" value="Transl_elong_P/YeiP_cen"/>
</dbReference>
<dbReference type="InterPro" id="IPR013852">
    <property type="entry name" value="Transl_elong_P/YeiP_CS"/>
</dbReference>
<dbReference type="InterPro" id="IPR008991">
    <property type="entry name" value="Translation_prot_SH3-like_sf"/>
</dbReference>
<dbReference type="NCBIfam" id="NF001810">
    <property type="entry name" value="PRK00529.1"/>
    <property type="match status" value="1"/>
</dbReference>
<dbReference type="NCBIfam" id="NF003392">
    <property type="entry name" value="PRK04542.1"/>
    <property type="match status" value="1"/>
</dbReference>
<dbReference type="NCBIfam" id="TIGR02178">
    <property type="entry name" value="yeiP"/>
    <property type="match status" value="1"/>
</dbReference>
<dbReference type="PANTHER" id="PTHR30053">
    <property type="entry name" value="ELONGATION FACTOR P"/>
    <property type="match status" value="1"/>
</dbReference>
<dbReference type="PANTHER" id="PTHR30053:SF14">
    <property type="entry name" value="TRANSLATION ELONGATION FACTOR KOW-LIKE DOMAIN-CONTAINING PROTEIN"/>
    <property type="match status" value="1"/>
</dbReference>
<dbReference type="Pfam" id="PF01132">
    <property type="entry name" value="EFP"/>
    <property type="match status" value="1"/>
</dbReference>
<dbReference type="Pfam" id="PF08207">
    <property type="entry name" value="EFP_N"/>
    <property type="match status" value="1"/>
</dbReference>
<dbReference type="Pfam" id="PF09285">
    <property type="entry name" value="Elong-fact-P_C"/>
    <property type="match status" value="1"/>
</dbReference>
<dbReference type="PIRSF" id="PIRSF005901">
    <property type="entry name" value="EF-P"/>
    <property type="match status" value="1"/>
</dbReference>
<dbReference type="SMART" id="SM01185">
    <property type="entry name" value="EFP"/>
    <property type="match status" value="1"/>
</dbReference>
<dbReference type="SMART" id="SM00841">
    <property type="entry name" value="Elong-fact-P_C"/>
    <property type="match status" value="1"/>
</dbReference>
<dbReference type="SUPFAM" id="SSF50249">
    <property type="entry name" value="Nucleic acid-binding proteins"/>
    <property type="match status" value="2"/>
</dbReference>
<dbReference type="SUPFAM" id="SSF50104">
    <property type="entry name" value="Translation proteins SH3-like domain"/>
    <property type="match status" value="1"/>
</dbReference>
<dbReference type="PROSITE" id="PS01275">
    <property type="entry name" value="EFP"/>
    <property type="match status" value="1"/>
</dbReference>
<protein>
    <recommendedName>
        <fullName evidence="1">Elongation factor P-like protein</fullName>
    </recommendedName>
</protein>
<comment type="similarity">
    <text evidence="1">Belongs to the elongation factor P family.</text>
</comment>
<comment type="sequence caution" evidence="2">
    <conflict type="erroneous initiation">
        <sequence resource="EMBL-CDS" id="ABV18081"/>
    </conflict>
</comment>